<evidence type="ECO:0000250" key="1">
    <source>
        <dbReference type="UniProtKB" id="P30729"/>
    </source>
</evidence>
<evidence type="ECO:0000250" key="2">
    <source>
        <dbReference type="UniProtKB" id="P51436"/>
    </source>
</evidence>
<evidence type="ECO:0000255" key="3"/>
<evidence type="ECO:0000255" key="4">
    <source>
        <dbReference type="PROSITE-ProRule" id="PRU00521"/>
    </source>
</evidence>
<evidence type="ECO:0000256" key="5">
    <source>
        <dbReference type="SAM" id="MobiDB-lite"/>
    </source>
</evidence>
<evidence type="ECO:0000269" key="6">
    <source>
    </source>
</evidence>
<evidence type="ECO:0000269" key="7">
    <source>
    </source>
</evidence>
<evidence type="ECO:0000269" key="8">
    <source>
    </source>
</evidence>
<evidence type="ECO:0000269" key="9">
    <source>
    </source>
</evidence>
<evidence type="ECO:0000269" key="10">
    <source>
    </source>
</evidence>
<evidence type="ECO:0000269" key="11">
    <source>
    </source>
</evidence>
<evidence type="ECO:0000269" key="12">
    <source>
    </source>
</evidence>
<evidence type="ECO:0000269" key="13">
    <source>
    </source>
</evidence>
<evidence type="ECO:0000269" key="14">
    <source>
    </source>
</evidence>
<evidence type="ECO:0000269" key="15">
    <source>
    </source>
</evidence>
<evidence type="ECO:0000269" key="16">
    <source>
    </source>
</evidence>
<evidence type="ECO:0000269" key="17">
    <source>
    </source>
</evidence>
<evidence type="ECO:0000269" key="18">
    <source>
    </source>
</evidence>
<evidence type="ECO:0000269" key="19">
    <source>
    </source>
</evidence>
<evidence type="ECO:0000269" key="20">
    <source>
    </source>
</evidence>
<evidence type="ECO:0000269" key="21">
    <source>
    </source>
</evidence>
<evidence type="ECO:0000305" key="22"/>
<evidence type="ECO:0000305" key="23">
    <source>
    </source>
</evidence>
<evidence type="ECO:0007744" key="24">
    <source>
        <dbReference type="PDB" id="5WIU"/>
    </source>
</evidence>
<evidence type="ECO:0007744" key="25">
    <source>
        <dbReference type="PDB" id="5WIV"/>
    </source>
</evidence>
<evidence type="ECO:0007829" key="26">
    <source>
        <dbReference type="PDB" id="5WIU"/>
    </source>
</evidence>
<gene>
    <name type="primary">DRD4</name>
</gene>
<name>DRD4_HUMAN</name>
<reference key="1">
    <citation type="journal article" date="1992" name="Nature">
        <title>Multiple dopamine D4 receptor variants in the human population.</title>
        <authorList>
            <person name="van Tol H.H."/>
            <person name="Wu C.M."/>
            <person name="Guan H.C."/>
            <person name="Ohara K."/>
            <person name="Bunzow J.R."/>
            <person name="Civelli O."/>
            <person name="Kennedy J."/>
            <person name="Seeman P."/>
            <person name="Niznik H.B."/>
            <person name="Jovanovic V."/>
        </authorList>
    </citation>
    <scope>NUCLEOTIDE SEQUENCE [MRNA] (ALLELE D4.7)</scope>
    <scope>POLYMORPHISM</scope>
    <scope>SUBCELLULAR LOCATION</scope>
</reference>
<reference key="2">
    <citation type="journal article" date="1991" name="Nature">
        <title>Cloning of the gene for a human dopamine D4 receptor with high affinity for the antipsychotic clozapine.</title>
        <authorList>
            <person name="van Tol H.H.M."/>
            <person name="Bunzow J.R."/>
            <person name="Guan H.-C."/>
            <person name="Sunahara R.K."/>
            <person name="Seeman P."/>
            <person name="Niznik H.B."/>
            <person name="Civelli O."/>
        </authorList>
    </citation>
    <scope>NUCLEOTIDE SEQUENCE [GENOMIC DNA] (ALLELE D4.2)</scope>
    <scope>FUNCTION</scope>
    <scope>SUBCELLULAR LOCATION</scope>
    <source>
        <tissue>Brain</tissue>
    </source>
</reference>
<reference key="3">
    <citation type="submission" date="2001-07" db="EMBL/GenBank/DDBJ databases">
        <title>Genome-wide discovery and analysis of human seven transmembrane helix receptor genes.</title>
        <authorList>
            <person name="Suwa M."/>
            <person name="Sato T."/>
            <person name="Okouchi I."/>
            <person name="Arita M."/>
            <person name="Futami K."/>
            <person name="Matsumoto S."/>
            <person name="Tsutsumi S."/>
            <person name="Aburatani H."/>
            <person name="Asai K."/>
            <person name="Akiyama Y."/>
        </authorList>
    </citation>
    <scope>NUCLEOTIDE SEQUENCE [GENOMIC DNA] (ALLELE D.4.4)</scope>
</reference>
<reference key="4">
    <citation type="submission" date="2007-12" db="EMBL/GenBank/DDBJ databases">
        <authorList>
            <person name="Kaighin V.A."/>
            <person name="Martin A.L."/>
            <person name="Aronstam R.S."/>
        </authorList>
    </citation>
    <scope>NUCLEOTIDE SEQUENCE [MRNA] (ALLELE D.4.4)</scope>
    <source>
        <tissue>Brain</tissue>
    </source>
</reference>
<reference key="5">
    <citation type="journal article" date="2006" name="Nature">
        <title>Human chromosome 11 DNA sequence and analysis including novel gene identification.</title>
        <authorList>
            <person name="Taylor T.D."/>
            <person name="Noguchi H."/>
            <person name="Totoki Y."/>
            <person name="Toyoda A."/>
            <person name="Kuroki Y."/>
            <person name="Dewar K."/>
            <person name="Lloyd C."/>
            <person name="Itoh T."/>
            <person name="Takeda T."/>
            <person name="Kim D.-W."/>
            <person name="She X."/>
            <person name="Barlow K.F."/>
            <person name="Bloom T."/>
            <person name="Bruford E."/>
            <person name="Chang J.L."/>
            <person name="Cuomo C.A."/>
            <person name="Eichler E."/>
            <person name="FitzGerald M.G."/>
            <person name="Jaffe D.B."/>
            <person name="LaButti K."/>
            <person name="Nicol R."/>
            <person name="Park H.-S."/>
            <person name="Seaman C."/>
            <person name="Sougnez C."/>
            <person name="Yang X."/>
            <person name="Zimmer A.R."/>
            <person name="Zody M.C."/>
            <person name="Birren B.W."/>
            <person name="Nusbaum C."/>
            <person name="Fujiyama A."/>
            <person name="Hattori M."/>
            <person name="Rogers J."/>
            <person name="Lander E.S."/>
            <person name="Sakaki Y."/>
        </authorList>
    </citation>
    <scope>NUCLEOTIDE SEQUENCE [LARGE SCALE GENOMIC DNA] (ALLELE D4.4)</scope>
</reference>
<reference key="6">
    <citation type="submission" date="2005-07" db="EMBL/GenBank/DDBJ databases">
        <authorList>
            <person name="Mural R.J."/>
            <person name="Istrail S."/>
            <person name="Sutton G.G."/>
            <person name="Florea L."/>
            <person name="Halpern A.L."/>
            <person name="Mobarry C.M."/>
            <person name="Lippert R."/>
            <person name="Walenz B."/>
            <person name="Shatkay H."/>
            <person name="Dew I."/>
            <person name="Miller J.R."/>
            <person name="Flanigan M.J."/>
            <person name="Edwards N.J."/>
            <person name="Bolanos R."/>
            <person name="Fasulo D."/>
            <person name="Halldorsson B.V."/>
            <person name="Hannenhalli S."/>
            <person name="Turner R."/>
            <person name="Yooseph S."/>
            <person name="Lu F."/>
            <person name="Nusskern D.R."/>
            <person name="Shue B.C."/>
            <person name="Zheng X.H."/>
            <person name="Zhong F."/>
            <person name="Delcher A.L."/>
            <person name="Huson D.H."/>
            <person name="Kravitz S.A."/>
            <person name="Mouchard L."/>
            <person name="Reinert K."/>
            <person name="Remington K.A."/>
            <person name="Clark A.G."/>
            <person name="Waterman M.S."/>
            <person name="Eichler E.E."/>
            <person name="Adams M.D."/>
            <person name="Hunkapiller M.W."/>
            <person name="Myers E.W."/>
            <person name="Venter J.C."/>
        </authorList>
    </citation>
    <scope>NUCLEOTIDE SEQUENCE [LARGE SCALE GENOMIC DNA] (ALLELE D.4.4)</scope>
</reference>
<reference key="7">
    <citation type="journal article" date="1993" name="Hum. Mol. Genet.">
        <title>A hypervariable segment in the human dopamine receptor D4 (DRD4) gene.</title>
        <authorList>
            <person name="Lichter J.B."/>
            <person name="Barr C.L."/>
            <person name="Kennedy J.L."/>
            <person name="Van Tol H.H."/>
            <person name="Kidd K.K."/>
            <person name="Livak K.J."/>
        </authorList>
    </citation>
    <scope>POLYMORPHISM</scope>
</reference>
<reference key="8">
    <citation type="journal article" date="1994" name="J. Biol. Chem.">
        <title>D4 dopamine receptor-mediated signaling events determined in transfected Chinese hamster ovary cells.</title>
        <authorList>
            <person name="Chio C.L."/>
            <person name="Drong R.F."/>
            <person name="Riley D.T."/>
            <person name="Gill G.S."/>
            <person name="Slightom J.L."/>
            <person name="Huff R.M."/>
        </authorList>
    </citation>
    <scope>FUNCTION</scope>
    <scope>SUBCELLULAR LOCATION</scope>
</reference>
<reference key="9">
    <citation type="journal article" date="1994" name="Mol. Pharmacol.">
        <title>Dopamine D4 receptor repeat: analysis of different native and mutant forms of the human and rat genes.</title>
        <authorList>
            <person name="Asghari V."/>
            <person name="Schoots O."/>
            <person name="van Kats S."/>
            <person name="Ohara K."/>
            <person name="Jovanovic V."/>
            <person name="Guan H.-C."/>
            <person name="Bunzow J.R."/>
            <person name="Petronis A."/>
            <person name="Van Tol H.H.M."/>
        </authorList>
    </citation>
    <scope>POLYMORPHISM</scope>
    <scope>FUNCTION</scope>
    <scope>SUBCELLULAR LOCATION</scope>
</reference>
<reference key="10">
    <citation type="journal article" date="1995" name="Brain Res. Mol. Brain Res.">
        <title>Full-length cDNA cloning and distribution of human dopamine D4 receptor.</title>
        <authorList>
            <person name="Matsumoto M."/>
            <person name="Hidaka K."/>
            <person name="Tada S."/>
            <person name="Tasaki Y."/>
            <person name="Yamaguchi T."/>
        </authorList>
    </citation>
    <scope>TISSUE SPECIFICITY</scope>
</reference>
<reference key="11">
    <citation type="journal article" date="1995" name="J. Neurochem.">
        <title>Modulation of intracellular cyclic AMP levels by different human dopamine D4 receptor variants.</title>
        <authorList>
            <person name="Asghari V."/>
            <person name="Sanyal S."/>
            <person name="Buchwaldt S."/>
            <person name="Paterson A."/>
            <person name="Jovanovic V."/>
            <person name="Van Tol H.H."/>
        </authorList>
    </citation>
    <scope>FUNCTION</scope>
    <scope>SUBCELLULAR LOCATION</scope>
</reference>
<reference key="12">
    <citation type="journal article" date="1997" name="J. Neurochem.">
        <title>Epinephrine and norepinephrine act as potent agonists at the recombinant human dopamine D4 receptor.</title>
        <authorList>
            <person name="Lanau F."/>
            <person name="Zenner M.T."/>
            <person name="Civelli O."/>
            <person name="Hartman D.S."/>
        </authorList>
    </citation>
    <scope>FUNCTION</scope>
    <scope>SUBCELLULAR LOCATION</scope>
</reference>
<reference key="13">
    <citation type="journal article" date="2002" name="Science">
        <title>Modulation of postendocytic sorting of G protein-coupled receptors.</title>
        <authorList>
            <person name="Whistler J.L."/>
            <person name="Enquist J."/>
            <person name="Marley A."/>
            <person name="Fong J."/>
            <person name="Gladher F."/>
            <person name="Tsuruda P."/>
            <person name="Murray S.R."/>
            <person name="Von Zastrow M."/>
        </authorList>
    </citation>
    <scope>INTERACTION WITH GPRASP1</scope>
</reference>
<reference key="14">
    <citation type="journal article" date="2006" name="Eur. J. Pharmacol.">
        <title>[35S]GTPgammaS binding at the human dopamine D4 receptor variants hD4.2, hD4.4 and hD4.7 following stimulation by dopamine, epinephrine and norepinephrine.</title>
        <authorList>
            <person name="Czermak C."/>
            <person name="Lehofer M."/>
            <person name="Liebmann P.M."/>
            <person name="Traynor J."/>
        </authorList>
    </citation>
    <scope>FUNCTION</scope>
    <scope>ACTIVITY REGULATION</scope>
    <scope>SUBCELLULAR LOCATION</scope>
    <scope>POLYMORPHISM</scope>
</reference>
<reference key="15">
    <citation type="journal article" date="2008" name="J. Biol. Chem.">
        <title>BTB Protein KLHL12 targets the dopamine D4 receptor for ubiquitination by a Cul3-based E3 ligase.</title>
        <authorList>
            <person name="Rondou P."/>
            <person name="Haegeman G."/>
            <person name="Vanhoenacker P."/>
            <person name="Van Craenenbroeck K."/>
        </authorList>
    </citation>
    <scope>UBIQUITINATION</scope>
    <scope>INTERACTION WITH KLHL12</scope>
</reference>
<reference key="16">
    <citation type="journal article" date="2010" name="J. Recept. Signal Transduct.">
        <title>The dopamine D(4) receptor, the ultimate disordered protein.</title>
        <authorList>
            <person name="Woods A.S."/>
        </authorList>
    </citation>
    <scope>POSSIBLE INTERACTION WITH ADORA2A</scope>
</reference>
<reference key="17">
    <citation type="journal article" date="2010" name="Cell. Signal.">
        <title>KLHL12-mediated ubiquitination of the dopamine D4 receptor does not target the receptor for degradation.</title>
        <authorList>
            <person name="Rondou P."/>
            <person name="Skieterska K."/>
            <person name="Packeu A."/>
            <person name="Lintermans B."/>
            <person name="Vanhoenacker P."/>
            <person name="Vauquelin G."/>
            <person name="Haegeman G."/>
            <person name="Van Craenenbroeck K."/>
        </authorList>
    </citation>
    <scope>UBIQUITINATION</scope>
    <scope>SUBCELLULAR LOCATION</scope>
</reference>
<reference key="18">
    <citation type="journal article" date="2011" name="Biochem. Biophys. Res. Commun.">
        <title>Dopamine D2 and D4 receptor heteromerization and its allosteric receptor-receptor interactions.</title>
        <authorList>
            <person name="Borroto-Escuela D.O."/>
            <person name="Van Craenenbroeck K."/>
            <person name="Romero-Fernandez W."/>
            <person name="Guidolin D."/>
            <person name="Woods A.S."/>
            <person name="Rivera A."/>
            <person name="Haegeman G."/>
            <person name="Agnati L.F."/>
            <person name="Tarakanov A.O."/>
            <person name="Fuxe K."/>
        </authorList>
    </citation>
    <scope>HOMOOLIGOMERIZATION</scope>
    <scope>INTERACTION WITH DRD2</scope>
</reference>
<reference key="19">
    <citation type="journal article" date="2016" name="Biochem. Biophys. Res. Commun.">
        <title>Palmitoylation of the carboxyl-terminal tail of dopamine D4 receptor is required for surface expression, endocytosis, and signaling.</title>
        <authorList>
            <person name="Zhang X."/>
            <person name="Kim K.M."/>
        </authorList>
    </citation>
    <scope>PALMITOYLATION AT CYS-419</scope>
    <scope>MUTAGENESIS OF CYS-418 AND CYS-419</scope>
    <scope>SUBCELLULAR LOCATION</scope>
    <scope>FUNCTION</scope>
</reference>
<reference key="20">
    <citation type="journal article" date="1992" name="Biochem. J.">
        <title>Molecular modelling of D2-like dopamine receptors.</title>
        <authorList>
            <person name="Livingstone C.D."/>
            <person name="Strange P.G."/>
            <person name="Naylor L.H."/>
        </authorList>
    </citation>
    <scope>3D-STRUCTURE MODELING</scope>
</reference>
<reference evidence="24 25" key="21">
    <citation type="journal article" date="2017" name="Science">
        <title>D4 dopamine receptor high-resolution structures enable the discovery of selective agonists.</title>
        <authorList>
            <person name="Wang S."/>
            <person name="Wacker D."/>
            <person name="Levit A."/>
            <person name="Che T."/>
            <person name="Betz R.M."/>
            <person name="McCorvy J.D."/>
            <person name="Venkatakrishnan A.J."/>
            <person name="Huang X.P."/>
            <person name="Dror R.O."/>
            <person name="Shoichet B.K."/>
            <person name="Roth B.L."/>
        </authorList>
    </citation>
    <scope>X-RAY CRYSTALLOGRAPHY (1.96 ANGSTROMS) OF 1-228 AND 335-419 IN COMPLEX WITH NEMONAPRIDE</scope>
    <scope>FUNCTION</scope>
    <scope>ACTIVITY REGULATION</scope>
    <scope>SUBCELLULAR LOCATION</scope>
    <scope>TOPOLOGY</scope>
    <scope>DISULFIDE BONDS</scope>
    <scope>MUTAGENESIS OF VAL-382</scope>
</reference>
<reference key="22">
    <citation type="journal article" date="1994" name="Am. J. Med. Genet.">
        <title>Dopamine D4 receptor variant, D4-glycine-194, in Africans, but not in Caucasians: no association with schizophrenia.</title>
        <authorList>
            <person name="Seeman P."/>
            <person name="Ulpian C."/>
            <person name="Chouinard G."/>
            <person name="van Tol H.H.M."/>
            <person name="Dwosh H."/>
            <person name="Lieberman J.A."/>
            <person name="Siminovitch K."/>
            <person name="Liu I.S.C."/>
            <person name="Waye J."/>
            <person name="Voruganti P."/>
            <person name="Hudson C."/>
            <person name="Serjeant G.R."/>
            <person name="Masibay A.S."/>
            <person name="Seeman M.V."/>
        </authorList>
    </citation>
    <scope>VARIANT GLY-194</scope>
</reference>
<dbReference type="EMBL" id="L12398">
    <property type="protein sequence ID" value="AAB59386.1"/>
    <property type="molecule type" value="mRNA"/>
</dbReference>
<dbReference type="EMBL" id="L12397">
    <property type="protein sequence ID" value="AAL58637.1"/>
    <property type="status" value="ALT_SEQ"/>
    <property type="molecule type" value="Genomic_DNA"/>
</dbReference>
<dbReference type="EMBL" id="AB065765">
    <property type="protein sequence ID" value="BAC05985.1"/>
    <property type="molecule type" value="Genomic_DNA"/>
</dbReference>
<dbReference type="EMBL" id="EU432112">
    <property type="protein sequence ID" value="ABY87911.1"/>
    <property type="molecule type" value="mRNA"/>
</dbReference>
<dbReference type="EMBL" id="AP006284">
    <property type="status" value="NOT_ANNOTATED_CDS"/>
    <property type="molecule type" value="Genomic_DNA"/>
</dbReference>
<dbReference type="EMBL" id="CH471158">
    <property type="protein sequence ID" value="EAX02369.1"/>
    <property type="molecule type" value="Genomic_DNA"/>
</dbReference>
<dbReference type="CCDS" id="CCDS7710.1"/>
<dbReference type="PIR" id="S15079">
    <property type="entry name" value="DYHUD4"/>
</dbReference>
<dbReference type="PIR" id="S24195">
    <property type="entry name" value="S24195"/>
</dbReference>
<dbReference type="RefSeq" id="NP_000788.2">
    <property type="nucleotide sequence ID" value="NM_000797.3"/>
</dbReference>
<dbReference type="PDB" id="5WIU">
    <property type="method" value="X-ray"/>
    <property type="resolution" value="1.96 A"/>
    <property type="chains" value="A=1-228, A=335-419"/>
</dbReference>
<dbReference type="PDB" id="5WIV">
    <property type="method" value="X-ray"/>
    <property type="resolution" value="2.14 A"/>
    <property type="chains" value="A=1-228, A=335-419"/>
</dbReference>
<dbReference type="PDBsum" id="5WIU"/>
<dbReference type="PDBsum" id="5WIV"/>
<dbReference type="SMR" id="P21917"/>
<dbReference type="BioGRID" id="108149">
    <property type="interactions" value="27"/>
</dbReference>
<dbReference type="CORUM" id="P21917"/>
<dbReference type="DIP" id="DIP-59865N"/>
<dbReference type="FunCoup" id="P21917">
    <property type="interactions" value="710"/>
</dbReference>
<dbReference type="IntAct" id="P21917">
    <property type="interactions" value="17"/>
</dbReference>
<dbReference type="MINT" id="P21917"/>
<dbReference type="STRING" id="9606.ENSP00000176183"/>
<dbReference type="BindingDB" id="P21917"/>
<dbReference type="ChEMBL" id="CHEMBL219"/>
<dbReference type="DrugBank" id="DB00543">
    <property type="generic name" value="Amoxapine"/>
</dbReference>
<dbReference type="DrugBank" id="DB00714">
    <property type="generic name" value="Apomorphine"/>
</dbReference>
<dbReference type="DrugBank" id="DB01238">
    <property type="generic name" value="Aripiprazole"/>
</dbReference>
<dbReference type="DrugBank" id="DB14185">
    <property type="generic name" value="Aripiprazole lauroxil"/>
</dbReference>
<dbReference type="DrugBank" id="DB06216">
    <property type="generic name" value="Asenapine"/>
</dbReference>
<dbReference type="DrugBank" id="DB01200">
    <property type="generic name" value="Bromocriptine"/>
</dbReference>
<dbReference type="DrugBank" id="DB00490">
    <property type="generic name" value="Buspirone"/>
</dbReference>
<dbReference type="DrugBank" id="DB00248">
    <property type="generic name" value="Cabergoline"/>
</dbReference>
<dbReference type="DrugBank" id="DB00477">
    <property type="generic name" value="Chlorpromazine"/>
</dbReference>
<dbReference type="DrugBank" id="DB00363">
    <property type="generic name" value="Clozapine"/>
</dbReference>
<dbReference type="DrugBank" id="DB13345">
    <property type="generic name" value="Dihydroergocristine"/>
</dbReference>
<dbReference type="DrugBank" id="DB00320">
    <property type="generic name" value="Dihydroergotamine"/>
</dbReference>
<dbReference type="DrugBank" id="DB00988">
    <property type="generic name" value="Dopamine"/>
</dbReference>
<dbReference type="DrugBank" id="DB11275">
    <property type="generic name" value="Epicriptine"/>
</dbReference>
<dbReference type="DrugBank" id="DB01049">
    <property type="generic name" value="Ergoloid mesylate"/>
</dbReference>
<dbReference type="DrugBank" id="DB04908">
    <property type="generic name" value="Flibanserin"/>
</dbReference>
<dbReference type="DrugBank" id="DB00875">
    <property type="generic name" value="Flupentixol"/>
</dbReference>
<dbReference type="DrugBank" id="DB04946">
    <property type="generic name" value="Iloperidone"/>
</dbReference>
<dbReference type="DrugBank" id="DB01235">
    <property type="generic name" value="Levodopa"/>
</dbReference>
<dbReference type="DrugBank" id="DB00589">
    <property type="generic name" value="Lisuride"/>
</dbReference>
<dbReference type="DrugBank" id="DB00408">
    <property type="generic name" value="Loxapine"/>
</dbReference>
<dbReference type="DrugBank" id="DB01403">
    <property type="generic name" value="Methotrimeprazine"/>
</dbReference>
<dbReference type="DrugBank" id="DB08804">
    <property type="generic name" value="Nandrolone decanoate"/>
</dbReference>
<dbReference type="DrugBank" id="DB00334">
    <property type="generic name" value="Olanzapine"/>
</dbReference>
<dbReference type="DrugBank" id="DB01267">
    <property type="generic name" value="Paliperidone"/>
</dbReference>
<dbReference type="DrugBank" id="DB12061">
    <property type="generic name" value="Pardoprunox"/>
</dbReference>
<dbReference type="DrugBank" id="DB01186">
    <property type="generic name" value="Pergolide"/>
</dbReference>
<dbReference type="DrugBank" id="DB08922">
    <property type="generic name" value="Perospirone"/>
</dbReference>
<dbReference type="DrugBank" id="DB11160">
    <property type="generic name" value="Phenyltoloxamine"/>
</dbReference>
<dbReference type="DrugBank" id="DB09286">
    <property type="generic name" value="Pipamperone"/>
</dbReference>
<dbReference type="DrugBank" id="DB12478">
    <property type="generic name" value="Piribedil"/>
</dbReference>
<dbReference type="DrugBank" id="DB00413">
    <property type="generic name" value="Pramipexole"/>
</dbReference>
<dbReference type="DrugBank" id="DB01224">
    <property type="generic name" value="Quetiapine"/>
</dbReference>
<dbReference type="DrugBank" id="DB00409">
    <property type="generic name" value="Remoxipride"/>
</dbReference>
<dbReference type="DrugBank" id="DB00268">
    <property type="generic name" value="Ropinirole"/>
</dbReference>
<dbReference type="DrugBank" id="DB05271">
    <property type="generic name" value="Rotigotine"/>
</dbReference>
<dbReference type="DrugBank" id="DB17056">
    <property type="generic name" value="Spiperone"/>
</dbReference>
<dbReference type="DrugBank" id="DB00391">
    <property type="generic name" value="Sulpiride"/>
</dbReference>
<dbReference type="DrugBank" id="DB06477">
    <property type="generic name" value="Sumanirole"/>
</dbReference>
<dbReference type="DrugBank" id="DB00246">
    <property type="generic name" value="Ziprasidone"/>
</dbReference>
<dbReference type="DrugCentral" id="P21917"/>
<dbReference type="GuidetoPHARMACOLOGY" id="217"/>
<dbReference type="GlyCosmos" id="P21917">
    <property type="glycosylation" value="1 site, No reported glycans"/>
</dbReference>
<dbReference type="GlyGen" id="P21917">
    <property type="glycosylation" value="5 sites, 1 O-linked glycan (4 sites)"/>
</dbReference>
<dbReference type="iPTMnet" id="P21917"/>
<dbReference type="PhosphoSitePlus" id="P21917"/>
<dbReference type="SwissPalm" id="P21917"/>
<dbReference type="BioMuta" id="DRD4"/>
<dbReference type="DMDM" id="1345939"/>
<dbReference type="MassIVE" id="P21917"/>
<dbReference type="PaxDb" id="9606-ENSP00000176183"/>
<dbReference type="PeptideAtlas" id="P21917"/>
<dbReference type="ProteomicsDB" id="53940"/>
<dbReference type="Antibodypedia" id="22579">
    <property type="antibodies" value="460 antibodies from 37 providers"/>
</dbReference>
<dbReference type="DNASU" id="1815"/>
<dbReference type="Ensembl" id="ENST00000176183.6">
    <property type="protein sequence ID" value="ENSP00000176183.5"/>
    <property type="gene ID" value="ENSG00000069696.7"/>
</dbReference>
<dbReference type="Ensembl" id="ENST00000611962.2">
    <property type="protein sequence ID" value="ENSP00000478431.1"/>
    <property type="gene ID" value="ENSG00000276825.2"/>
</dbReference>
<dbReference type="GeneID" id="1815"/>
<dbReference type="KEGG" id="hsa:1815"/>
<dbReference type="MANE-Select" id="ENST00000176183.6">
    <property type="protein sequence ID" value="ENSP00000176183.5"/>
    <property type="RefSeq nucleotide sequence ID" value="NM_000797.4"/>
    <property type="RefSeq protein sequence ID" value="NP_000788.2"/>
</dbReference>
<dbReference type="UCSC" id="uc001lqp.3">
    <property type="organism name" value="human"/>
</dbReference>
<dbReference type="AGR" id="HGNC:3025"/>
<dbReference type="CTD" id="1815"/>
<dbReference type="DisGeNET" id="1815"/>
<dbReference type="GeneCards" id="DRD4"/>
<dbReference type="HGNC" id="HGNC:3025">
    <property type="gene designation" value="DRD4"/>
</dbReference>
<dbReference type="HPA" id="ENSG00000069696">
    <property type="expression patterns" value="Low tissue specificity"/>
</dbReference>
<dbReference type="MalaCards" id="DRD4"/>
<dbReference type="MIM" id="126452">
    <property type="type" value="gene"/>
</dbReference>
<dbReference type="neXtProt" id="NX_P21917"/>
<dbReference type="OpenTargets" id="ENSG00000069696"/>
<dbReference type="PharmGKB" id="PA27480"/>
<dbReference type="VEuPathDB" id="HostDB:ENSG00000069696"/>
<dbReference type="GeneTree" id="ENSGT00940000160974"/>
<dbReference type="HOGENOM" id="CLU_009579_11_1_1"/>
<dbReference type="InParanoid" id="P21917"/>
<dbReference type="OMA" id="VVHITQA"/>
<dbReference type="OrthoDB" id="10010417at2759"/>
<dbReference type="PAN-GO" id="P21917">
    <property type="GO annotations" value="6 GO annotations based on evolutionary models"/>
</dbReference>
<dbReference type="PhylomeDB" id="P21917"/>
<dbReference type="TreeFam" id="TF334382"/>
<dbReference type="PathwayCommons" id="P21917"/>
<dbReference type="Reactome" id="R-HSA-390651">
    <property type="pathway name" value="Dopamine receptors"/>
</dbReference>
<dbReference type="Reactome" id="R-HSA-418594">
    <property type="pathway name" value="G alpha (i) signalling events"/>
</dbReference>
<dbReference type="SignaLink" id="P21917"/>
<dbReference type="SIGNOR" id="P21917"/>
<dbReference type="BioGRID-ORCS" id="1815">
    <property type="hits" value="8 hits in 1149 CRISPR screens"/>
</dbReference>
<dbReference type="ChiTaRS" id="DRD4">
    <property type="organism name" value="human"/>
</dbReference>
<dbReference type="GeneWiki" id="Dopamine_receptor_D4"/>
<dbReference type="GenomeRNAi" id="1815"/>
<dbReference type="Pharos" id="P21917">
    <property type="development level" value="Tchem"/>
</dbReference>
<dbReference type="PRO" id="PR:P21917"/>
<dbReference type="Proteomes" id="UP000005640">
    <property type="component" value="Chromosome 11"/>
</dbReference>
<dbReference type="RNAct" id="P21917">
    <property type="molecule type" value="protein"/>
</dbReference>
<dbReference type="Bgee" id="ENSG00000069696">
    <property type="expression patterns" value="Expressed in male germ line stem cell (sensu Vertebrata) in testis and 92 other cell types or tissues"/>
</dbReference>
<dbReference type="GO" id="GO:0005813">
    <property type="term" value="C:centrosome"/>
    <property type="evidence" value="ECO:0000314"/>
    <property type="project" value="HPA"/>
</dbReference>
<dbReference type="GO" id="GO:0030425">
    <property type="term" value="C:dendrite"/>
    <property type="evidence" value="ECO:0000318"/>
    <property type="project" value="GO_Central"/>
</dbReference>
<dbReference type="GO" id="GO:0098978">
    <property type="term" value="C:glutamatergic synapse"/>
    <property type="evidence" value="ECO:0007669"/>
    <property type="project" value="Ensembl"/>
</dbReference>
<dbReference type="GO" id="GO:0016020">
    <property type="term" value="C:membrane"/>
    <property type="evidence" value="ECO:0000314"/>
    <property type="project" value="BHF-UCL"/>
</dbReference>
<dbReference type="GO" id="GO:0005886">
    <property type="term" value="C:plasma membrane"/>
    <property type="evidence" value="ECO:0000314"/>
    <property type="project" value="UniProtKB"/>
</dbReference>
<dbReference type="GO" id="GO:0098794">
    <property type="term" value="C:postsynapse"/>
    <property type="evidence" value="ECO:0007669"/>
    <property type="project" value="GOC"/>
</dbReference>
<dbReference type="GO" id="GO:0035240">
    <property type="term" value="F:dopamine binding"/>
    <property type="evidence" value="ECO:0000314"/>
    <property type="project" value="UniProtKB"/>
</dbReference>
<dbReference type="GO" id="GO:0004952">
    <property type="term" value="F:dopamine neurotransmitter receptor activity"/>
    <property type="evidence" value="ECO:0000314"/>
    <property type="project" value="BHF-UCL"/>
</dbReference>
<dbReference type="GO" id="GO:0001591">
    <property type="term" value="F:dopamine neurotransmitter receptor activity, coupled via Gi/Go"/>
    <property type="evidence" value="ECO:0000314"/>
    <property type="project" value="UniProtKB"/>
</dbReference>
<dbReference type="GO" id="GO:0051379">
    <property type="term" value="F:epinephrine binding"/>
    <property type="evidence" value="ECO:0000314"/>
    <property type="project" value="UniProtKB"/>
</dbReference>
<dbReference type="GO" id="GO:0004993">
    <property type="term" value="F:G protein-coupled serotonin receptor activity"/>
    <property type="evidence" value="ECO:0000318"/>
    <property type="project" value="GO_Central"/>
</dbReference>
<dbReference type="GO" id="GO:0042802">
    <property type="term" value="F:identical protein binding"/>
    <property type="evidence" value="ECO:0000353"/>
    <property type="project" value="IntAct"/>
</dbReference>
<dbReference type="GO" id="GO:0046872">
    <property type="term" value="F:metal ion binding"/>
    <property type="evidence" value="ECO:0007669"/>
    <property type="project" value="UniProtKB-KW"/>
</dbReference>
<dbReference type="GO" id="GO:0030594">
    <property type="term" value="F:neurotransmitter receptor activity"/>
    <property type="evidence" value="ECO:0000318"/>
    <property type="project" value="GO_Central"/>
</dbReference>
<dbReference type="GO" id="GO:0051380">
    <property type="term" value="F:norepinephrine binding"/>
    <property type="evidence" value="ECO:0000314"/>
    <property type="project" value="UniProtKB"/>
</dbReference>
<dbReference type="GO" id="GO:0015459">
    <property type="term" value="F:potassium channel regulator activity"/>
    <property type="evidence" value="ECO:0000303"/>
    <property type="project" value="BHF-UCL"/>
</dbReference>
<dbReference type="GO" id="GO:0017124">
    <property type="term" value="F:SH3 domain binding"/>
    <property type="evidence" value="ECO:0000314"/>
    <property type="project" value="BHF-UCL"/>
</dbReference>
<dbReference type="GO" id="GO:0007195">
    <property type="term" value="P:adenylate cyclase-inhibiting dopamine receptor signaling pathway"/>
    <property type="evidence" value="ECO:0000314"/>
    <property type="project" value="UniProtKB"/>
</dbReference>
<dbReference type="GO" id="GO:0007188">
    <property type="term" value="P:adenylate cyclase-modulating G protein-coupled receptor signaling pathway"/>
    <property type="evidence" value="ECO:0000318"/>
    <property type="project" value="GO_Central"/>
</dbReference>
<dbReference type="GO" id="GO:0008344">
    <property type="term" value="P:adult locomotory behavior"/>
    <property type="evidence" value="ECO:0000250"/>
    <property type="project" value="BHF-UCL"/>
</dbReference>
<dbReference type="GO" id="GO:0050482">
    <property type="term" value="P:arachidonate secretion"/>
    <property type="evidence" value="ECO:0000314"/>
    <property type="project" value="BHF-UCL"/>
</dbReference>
<dbReference type="GO" id="GO:0001662">
    <property type="term" value="P:behavioral fear response"/>
    <property type="evidence" value="ECO:0000303"/>
    <property type="project" value="BHF-UCL"/>
</dbReference>
<dbReference type="GO" id="GO:0048148">
    <property type="term" value="P:behavioral response to cocaine"/>
    <property type="evidence" value="ECO:0000250"/>
    <property type="project" value="BHF-UCL"/>
</dbReference>
<dbReference type="GO" id="GO:0048149">
    <property type="term" value="P:behavioral response to ethanol"/>
    <property type="evidence" value="ECO:0000304"/>
    <property type="project" value="BHF-UCL"/>
</dbReference>
<dbReference type="GO" id="GO:0007268">
    <property type="term" value="P:chemical synaptic transmission"/>
    <property type="evidence" value="ECO:0000318"/>
    <property type="project" value="GO_Central"/>
</dbReference>
<dbReference type="GO" id="GO:0042596">
    <property type="term" value="P:fear response"/>
    <property type="evidence" value="ECO:0000250"/>
    <property type="project" value="BHF-UCL"/>
</dbReference>
<dbReference type="GO" id="GO:0007187">
    <property type="term" value="P:G protein-coupled receptor signaling pathway, coupled to cyclic nucleotide second messenger"/>
    <property type="evidence" value="ECO:0000318"/>
    <property type="project" value="GO_Central"/>
</dbReference>
<dbReference type="GO" id="GO:0060080">
    <property type="term" value="P:inhibitory postsynaptic potential"/>
    <property type="evidence" value="ECO:0000250"/>
    <property type="project" value="BHF-UCL"/>
</dbReference>
<dbReference type="GO" id="GO:0006874">
    <property type="term" value="P:intracellular calcium ion homeostasis"/>
    <property type="evidence" value="ECO:0000314"/>
    <property type="project" value="BHF-UCL"/>
</dbReference>
<dbReference type="GO" id="GO:0050709">
    <property type="term" value="P:negative regulation of protein secretion"/>
    <property type="evidence" value="ECO:0000314"/>
    <property type="project" value="BHF-UCL"/>
</dbReference>
<dbReference type="GO" id="GO:0060158">
    <property type="term" value="P:phospholipase C-activating dopamine receptor signaling pathway"/>
    <property type="evidence" value="ECO:0000314"/>
    <property type="project" value="BHF-UCL"/>
</dbReference>
<dbReference type="GO" id="GO:0051586">
    <property type="term" value="P:positive regulation of dopamine uptake involved in synaptic transmission"/>
    <property type="evidence" value="ECO:0000305"/>
    <property type="project" value="BHF-UCL"/>
</dbReference>
<dbReference type="GO" id="GO:0043406">
    <property type="term" value="P:positive regulation of MAP kinase activity"/>
    <property type="evidence" value="ECO:0000314"/>
    <property type="project" value="BHF-UCL"/>
</dbReference>
<dbReference type="GO" id="GO:0042752">
    <property type="term" value="P:regulation of circadian rhythm"/>
    <property type="evidence" value="ECO:0000250"/>
    <property type="project" value="UniProtKB"/>
</dbReference>
<dbReference type="GO" id="GO:0042053">
    <property type="term" value="P:regulation of dopamine metabolic process"/>
    <property type="evidence" value="ECO:0000250"/>
    <property type="project" value="BHF-UCL"/>
</dbReference>
<dbReference type="GO" id="GO:0099149">
    <property type="term" value="P:regulation of postsynaptic neurotransmitter receptor internalization"/>
    <property type="evidence" value="ECO:0007669"/>
    <property type="project" value="Ensembl"/>
</dbReference>
<dbReference type="GO" id="GO:0001975">
    <property type="term" value="P:response to amphetamine"/>
    <property type="evidence" value="ECO:0000250"/>
    <property type="project" value="BHF-UCL"/>
</dbReference>
<dbReference type="GO" id="GO:0034776">
    <property type="term" value="P:response to histamine"/>
    <property type="evidence" value="ECO:0000314"/>
    <property type="project" value="BHF-UCL"/>
</dbReference>
<dbReference type="GO" id="GO:0048511">
    <property type="term" value="P:rhythmic process"/>
    <property type="evidence" value="ECO:0007669"/>
    <property type="project" value="UniProtKB-KW"/>
</dbReference>
<dbReference type="GO" id="GO:0035176">
    <property type="term" value="P:social behavior"/>
    <property type="evidence" value="ECO:0000303"/>
    <property type="project" value="BHF-UCL"/>
</dbReference>
<dbReference type="CDD" id="cd15308">
    <property type="entry name" value="7tmA_D4_dopamine_R"/>
    <property type="match status" value="1"/>
</dbReference>
<dbReference type="FunFam" id="1.20.1070.10:FF:000362">
    <property type="entry name" value="D(4) dopamine receptor"/>
    <property type="match status" value="1"/>
</dbReference>
<dbReference type="FunFam" id="1.20.1070.10:FF:000361">
    <property type="entry name" value="Dopamine receptor D4"/>
    <property type="match status" value="1"/>
</dbReference>
<dbReference type="Gene3D" id="1.20.1070.10">
    <property type="entry name" value="Rhodopsin 7-helix transmembrane proteins"/>
    <property type="match status" value="2"/>
</dbReference>
<dbReference type="InterPro" id="IPR002185">
    <property type="entry name" value="Dopamine_D4_rcpt"/>
</dbReference>
<dbReference type="InterPro" id="IPR000929">
    <property type="entry name" value="Dopamine_rcpt"/>
</dbReference>
<dbReference type="InterPro" id="IPR000276">
    <property type="entry name" value="GPCR_Rhodpsn"/>
</dbReference>
<dbReference type="InterPro" id="IPR017452">
    <property type="entry name" value="GPCR_Rhodpsn_7TM"/>
</dbReference>
<dbReference type="PANTHER" id="PTHR24248">
    <property type="entry name" value="ADRENERGIC RECEPTOR-RELATED G-PROTEIN COUPLED RECEPTOR"/>
    <property type="match status" value="1"/>
</dbReference>
<dbReference type="PANTHER" id="PTHR24248:SF143">
    <property type="entry name" value="D(4) DOPAMINE RECEPTOR"/>
    <property type="match status" value="1"/>
</dbReference>
<dbReference type="Pfam" id="PF00001">
    <property type="entry name" value="7tm_1"/>
    <property type="match status" value="1"/>
</dbReference>
<dbReference type="PRINTS" id="PR00569">
    <property type="entry name" value="DOPAMINED4R"/>
</dbReference>
<dbReference type="PRINTS" id="PR00242">
    <property type="entry name" value="DOPAMINER"/>
</dbReference>
<dbReference type="PRINTS" id="PR00237">
    <property type="entry name" value="GPCRRHODOPSN"/>
</dbReference>
<dbReference type="SMART" id="SM01381">
    <property type="entry name" value="7TM_GPCR_Srsx"/>
    <property type="match status" value="1"/>
</dbReference>
<dbReference type="SUPFAM" id="SSF81321">
    <property type="entry name" value="Family A G protein-coupled receptor-like"/>
    <property type="match status" value="1"/>
</dbReference>
<dbReference type="PROSITE" id="PS00237">
    <property type="entry name" value="G_PROTEIN_RECEP_F1_1"/>
    <property type="match status" value="1"/>
</dbReference>
<dbReference type="PROSITE" id="PS50262">
    <property type="entry name" value="G_PROTEIN_RECEP_F1_2"/>
    <property type="match status" value="1"/>
</dbReference>
<proteinExistence type="evidence at protein level"/>
<protein>
    <recommendedName>
        <fullName>D(4) dopamine receptor</fullName>
    </recommendedName>
    <alternativeName>
        <fullName>D(2C) dopamine receptor</fullName>
    </alternativeName>
    <alternativeName>
        <fullName>Dopamine D4 receptor</fullName>
    </alternativeName>
</protein>
<keyword id="KW-0002">3D-structure</keyword>
<keyword id="KW-0090">Biological rhythms</keyword>
<keyword id="KW-1003">Cell membrane</keyword>
<keyword id="KW-1015">Disulfide bond</keyword>
<keyword id="KW-0297">G-protein coupled receptor</keyword>
<keyword id="KW-0325">Glycoprotein</keyword>
<keyword id="KW-0449">Lipoprotein</keyword>
<keyword id="KW-0472">Membrane</keyword>
<keyword id="KW-0479">Metal-binding</keyword>
<keyword id="KW-0564">Palmitate</keyword>
<keyword id="KW-1267">Proteomics identification</keyword>
<keyword id="KW-0675">Receptor</keyword>
<keyword id="KW-1185">Reference proteome</keyword>
<keyword id="KW-0677">Repeat</keyword>
<keyword id="KW-0915">Sodium</keyword>
<keyword id="KW-0807">Transducer</keyword>
<keyword id="KW-0812">Transmembrane</keyword>
<keyword id="KW-1133">Transmembrane helix</keyword>
<keyword id="KW-0832">Ubl conjugation</keyword>
<comment type="function">
    <text evidence="2 8 10 13 14 15 16 19 21">Dopamine receptor responsible for neuronal signaling in the mesolimbic system of the brain, an area of the brain that regulates emotion and complex behavior. Activated by dopamine, but also by epinephrine and norepinephrine, and by numerous synthetic agonists and drugs (PubMed:16423344, PubMed:27659709, PubMed:29051383, PubMed:9003072). Agonist binding triggers signaling via G proteins that inhibit adenylyl cyclase (PubMed:16423344, PubMed:27659709, PubMed:29051383, PubMed:7512953, PubMed:7643093). Modulates the circadian rhythm of contrast sensitivity by regulating the rhythmic expression of NPAS2 in the retinal ganglion cells (By similarity).</text>
</comment>
<comment type="activity regulation">
    <text evidence="8 14">Signaling in response to agonists such as dopamine, epinephrine and norepinephrine is modulated by Na(+); lower Na(+) levels result in higher receptor activity (in vitro).</text>
</comment>
<comment type="subunit">
    <text evidence="1 6 9 12">Forms homo- and heterooligomers with DRD2. D4.7 allele exhibits higher affinity for homodimers compared to DRD2 heterodimers, while alleles D42. and 4.4 have similar affinities for both. The interaction with DRD2 may modulate agonist-induced downstream signaling (PubMed:21184734). Interacts with CLIC6 (By similarity). Interacts with GPRASP1 (PubMed:12142540). May interact with ADORA2A (PubMed:20836733). Interacts with KLHL12 (PubMed:18303015).</text>
</comment>
<comment type="interaction">
    <interactant intactId="EBI-8592297">
        <id>P21917</id>
    </interactant>
    <interactant intactId="EBI-77613">
        <id>P05067</id>
        <label>APP</label>
    </interactant>
    <organismsDiffer>false</organismsDiffer>
    <experiments>6</experiments>
</comment>
<comment type="interaction">
    <interactant intactId="EBI-8592297">
        <id>P21917</id>
    </interactant>
    <interactant intactId="EBI-8592297">
        <id>P21917</id>
        <label>DRD4</label>
    </interactant>
    <organismsDiffer>false</organismsDiffer>
    <experiments>5</experiments>
</comment>
<comment type="interaction">
    <interactant intactId="EBI-8592297">
        <id>P21917</id>
    </interactant>
    <interactant intactId="EBI-1267511">
        <id>P17677</id>
        <label>GAP43</label>
    </interactant>
    <organismsDiffer>false</organismsDiffer>
    <experiments>3</experiments>
</comment>
<comment type="interaction">
    <interactant intactId="EBI-8592297">
        <id>P21917</id>
    </interactant>
    <interactant intactId="EBI-2214155">
        <id>P50579</id>
        <label>METAP2</label>
    </interactant>
    <organismsDiffer>false</organismsDiffer>
    <experiments>3</experiments>
</comment>
<comment type="interaction">
    <interactant intactId="EBI-8592297">
        <id>P21917</id>
    </interactant>
    <interactant intactId="EBI-15098952">
        <id>Q96P71-2</id>
        <label>NECAB3</label>
    </interactant>
    <organismsDiffer>false</organismsDiffer>
    <experiments>3</experiments>
</comment>
<comment type="interaction">
    <interactant intactId="EBI-8592297">
        <id>P21917</id>
    </interactant>
    <interactant intactId="EBI-960169">
        <id>P61764</id>
        <label>STXBP1</label>
    </interactant>
    <organismsDiffer>false</organismsDiffer>
    <experiments>3</experiments>
</comment>
<comment type="subcellular location">
    <subcellularLocation>
        <location evidence="7 8 10 11 13 14 15 16 19 21">Cell membrane</location>
        <topology evidence="11 14">Multi-pass membrane protein</topology>
    </subcellularLocation>
</comment>
<comment type="tissue specificity">
    <text evidence="18">Highly expressed in retina. Detected at much lower levels in brain, in amygdala, thalamus, hypothalamus, cerebellum and pituitary.</text>
</comment>
<comment type="PTM">
    <text evidence="9 11">Polyubiquitinated by the BCR(KLHL12) E3 ubiquitin ligase complex: polyubiquitination does not lead to degradation of DRD4 protein.</text>
</comment>
<comment type="PTM">
    <text evidence="13">Palmitoylated. Palmitoylation of the C-terminal Cys is important for normal expression at the cell membrane.</text>
</comment>
<comment type="polymorphism">
    <text evidence="7 8 19 20">The number of repeats of 16 amino acids in the third cytoplasmic loop is highly polymorphic and varies among different alleles. Alleles corresponding in size to a 2 (D4.2), 3 (D4.3), 4 (D4.4), 5 (D4.5), 6 (D4.6), 7 (D4.7) and 9 (D4.9) repeats have been described. The sequence shown is that of allele D4.4. The polymorphic repeat sequence has little influence on DRD4-binding profiles and might not be essential for G protein interaction.</text>
</comment>
<comment type="similarity">
    <text evidence="4">Belongs to the G-protein coupled receptor 1 family.</text>
</comment>
<comment type="sequence caution" evidence="22">
    <conflict type="erroneous gene model prediction">
        <sequence resource="EMBL-CDS" id="AAL58637"/>
    </conflict>
</comment>
<sequence>MGNRSTADADGLLAGRGPAAGASAGASAGLAGQGAAALVGGVLLIGAVLAGNSLVCVSVATERALQTPTNSFIVSLAAADLLLALLVLPLFVYSEVQGGAWLLSPRLCDALMAMDVMLCTASIFNLCAISVDRFVAVAVPLRYNRQGGSRRQLLLIGATWLLSAAVAAPVLCGLNDVRGRDPAVCRLEDRDYVVYSSVCSFFLPCPLMLLLYWATFRGLQRWEVARRAKLHGRAPRRPSGPGPPSPTPPAPRLPQDPCGPDCAPPAPGLPRGPCGPDCAPAAPSLPQDPCGPDCAPPAPGLPPDPCGSNCAPPDAVRAAALPPQTPPQTRRRRRAKITGRERKAMRVLPVVVGAFLLCWTPFFVVHITQALCPACSVPPRLVSAVTWLGYVNSALNPVIYTVFNAEFRNVFRKALRACC</sequence>
<organism>
    <name type="scientific">Homo sapiens</name>
    <name type="common">Human</name>
    <dbReference type="NCBI Taxonomy" id="9606"/>
    <lineage>
        <taxon>Eukaryota</taxon>
        <taxon>Metazoa</taxon>
        <taxon>Chordata</taxon>
        <taxon>Craniata</taxon>
        <taxon>Vertebrata</taxon>
        <taxon>Euteleostomi</taxon>
        <taxon>Mammalia</taxon>
        <taxon>Eutheria</taxon>
        <taxon>Euarchontoglires</taxon>
        <taxon>Primates</taxon>
        <taxon>Haplorrhini</taxon>
        <taxon>Catarrhini</taxon>
        <taxon>Hominidae</taxon>
        <taxon>Homo</taxon>
    </lineage>
</organism>
<accession>P21917</accession>
<accession>B0M0J7</accession>
<accession>Q7Z7Q5</accession>
<accession>Q8NGM5</accession>
<feature type="chain" id="PRO_0000069401" description="D(4) dopamine receptor">
    <location>
        <begin position="1"/>
        <end position="419"/>
    </location>
</feature>
<feature type="topological domain" description="Extracellular" evidence="14">
    <location>
        <begin position="1"/>
        <end position="29"/>
    </location>
</feature>
<feature type="transmembrane region" description="Helical; Name=1" evidence="14">
    <location>
        <begin position="30"/>
        <end position="50"/>
    </location>
</feature>
<feature type="topological domain" description="Cytoplasmic" evidence="14">
    <location>
        <begin position="51"/>
        <end position="71"/>
    </location>
</feature>
<feature type="transmembrane region" description="Helical; Name=2" evidence="14">
    <location>
        <begin position="72"/>
        <end position="92"/>
    </location>
</feature>
<feature type="topological domain" description="Extracellular" evidence="14">
    <location>
        <begin position="93"/>
        <end position="110"/>
    </location>
</feature>
<feature type="transmembrane region" description="Helical; Name=3" evidence="14">
    <location>
        <begin position="111"/>
        <end position="131"/>
    </location>
</feature>
<feature type="topological domain" description="Cytoplasmic" evidence="14">
    <location>
        <begin position="132"/>
        <end position="152"/>
    </location>
</feature>
<feature type="transmembrane region" description="Helical; Name=4" evidence="14">
    <location>
        <begin position="153"/>
        <end position="173"/>
    </location>
</feature>
<feature type="topological domain" description="Extracellular" evidence="14">
    <location>
        <begin position="174"/>
        <end position="192"/>
    </location>
</feature>
<feature type="transmembrane region" description="Helical; Name=5" evidence="14">
    <location>
        <begin position="193"/>
        <end position="213"/>
    </location>
</feature>
<feature type="topological domain" description="Cytoplasmic" evidence="14">
    <location>
        <begin position="214"/>
        <end position="346"/>
    </location>
</feature>
<feature type="transmembrane region" description="Helical; Name=6" evidence="14">
    <location>
        <begin position="347"/>
        <end position="367"/>
    </location>
</feature>
<feature type="topological domain" description="Extracellular" evidence="14">
    <location>
        <begin position="368"/>
        <end position="382"/>
    </location>
</feature>
<feature type="transmembrane region" description="Helical; Name=7" evidence="14">
    <location>
        <begin position="383"/>
        <end position="403"/>
    </location>
</feature>
<feature type="topological domain" description="Cytoplasmic" evidence="14">
    <location>
        <begin position="404"/>
        <end position="419"/>
    </location>
</feature>
<feature type="repeat" description="1; approximate">
    <location>
        <begin position="249"/>
        <end position="264"/>
    </location>
</feature>
<feature type="repeat" description="2">
    <location>
        <begin position="265"/>
        <end position="280"/>
    </location>
</feature>
<feature type="repeat" description="3">
    <location>
        <begin position="281"/>
        <end position="296"/>
    </location>
</feature>
<feature type="repeat" description="4; approximate">
    <location>
        <begin position="297"/>
        <end position="312"/>
    </location>
</feature>
<feature type="region of interest" description="Disordered" evidence="5">
    <location>
        <begin position="230"/>
        <end position="264"/>
    </location>
</feature>
<feature type="region of interest" description="4 X 16 AA approximate tandem repeats of [PA]-A-P-G-L-P-[PQR]-[DG]-P-C-G-P-D-C-A-P">
    <location>
        <begin position="249"/>
        <end position="312"/>
    </location>
</feature>
<feature type="region of interest" description="Disordered" evidence="5">
    <location>
        <begin position="317"/>
        <end position="336"/>
    </location>
</feature>
<feature type="compositionally biased region" description="Pro residues" evidence="5">
    <location>
        <begin position="238"/>
        <end position="254"/>
    </location>
</feature>
<feature type="binding site" evidence="23">
    <location>
        <position position="80"/>
    </location>
    <ligand>
        <name>Na(+)</name>
        <dbReference type="ChEBI" id="CHEBI:29101"/>
    </ligand>
</feature>
<feature type="binding site" evidence="14 24 25">
    <location>
        <position position="115"/>
    </location>
    <ligand>
        <name>(2R,3R)-nemonapride</name>
        <dbReference type="ChEBI" id="CHEBI:188145"/>
        <note>antagonist</note>
    </ligand>
</feature>
<feature type="binding site" evidence="23">
    <location>
        <position position="122"/>
    </location>
    <ligand>
        <name>Na(+)</name>
        <dbReference type="ChEBI" id="CHEBI:29101"/>
    </ligand>
</feature>
<feature type="binding site" evidence="14 24 25">
    <location>
        <position position="196"/>
    </location>
    <ligand>
        <name>(2R,3R)-nemonapride</name>
        <dbReference type="ChEBI" id="CHEBI:188145"/>
        <note>antagonist</note>
    </ligand>
</feature>
<feature type="lipid moiety-binding region" description="S-palmitoyl cysteine" evidence="13">
    <location>
        <position position="419"/>
    </location>
</feature>
<feature type="glycosylation site" description="N-linked (GlcNAc...) asparagine" evidence="3">
    <location>
        <position position="3"/>
    </location>
</feature>
<feature type="disulfide bond" evidence="4 14 24 25">
    <location>
        <begin position="108"/>
        <end position="185"/>
    </location>
</feature>
<feature type="disulfide bond" evidence="14 24 25">
    <location>
        <begin position="372"/>
        <end position="375"/>
    </location>
</feature>
<feature type="sequence variant" id="VAR_003464" description="In dbSNP:rs1800443." evidence="17">
    <original>V</original>
    <variation>G</variation>
    <location>
        <position position="194"/>
    </location>
</feature>
<feature type="sequence variant" id="VAR_003465" description="In allele D4.2." evidence="10">
    <location>
        <begin position="265"/>
        <end position="296"/>
    </location>
</feature>
<feature type="sequence variant" id="VAR_081438" description="In allele D4.7." evidence="7">
    <original>S</original>
    <variation>GLPPDPCGPDCAPPAPGLPQDPCGPDCAPPAPGLPRGPCGPDCAPPAPG</variation>
    <location>
        <position position="284"/>
    </location>
</feature>
<feature type="mutagenesis site" description="Increased basal level of G protein-mediated signaling." evidence="14">
    <original>V</original>
    <variation>Y</variation>
    <location>
        <position position="382"/>
    </location>
</feature>
<feature type="mutagenesis site" description="No effect on palmitoylation." evidence="13">
    <original>C</original>
    <variation>G</variation>
    <location>
        <position position="418"/>
    </location>
</feature>
<feature type="mutagenesis site" description="Loss of palmitoylation." evidence="13">
    <original>C</original>
    <variation>G</variation>
    <location>
        <position position="419"/>
    </location>
</feature>
<feature type="sequence conflict" description="In Ref. 2; BAC05985." evidence="22" ref="2">
    <original>R</original>
    <variation>F</variation>
    <location>
        <position position="237"/>
    </location>
</feature>
<feature type="helix" evidence="26">
    <location>
        <begin position="35"/>
        <end position="61"/>
    </location>
</feature>
<feature type="helix" evidence="26">
    <location>
        <begin position="63"/>
        <end position="65"/>
    </location>
</feature>
<feature type="helix" evidence="26">
    <location>
        <begin position="68"/>
        <end position="86"/>
    </location>
</feature>
<feature type="helix" evidence="26">
    <location>
        <begin position="88"/>
        <end position="96"/>
    </location>
</feature>
<feature type="turn" evidence="26">
    <location>
        <begin position="97"/>
        <end position="99"/>
    </location>
</feature>
<feature type="helix" evidence="26">
    <location>
        <begin position="105"/>
        <end position="138"/>
    </location>
</feature>
<feature type="strand" evidence="26">
    <location>
        <begin position="144"/>
        <end position="147"/>
    </location>
</feature>
<feature type="helix" evidence="26">
    <location>
        <begin position="151"/>
        <end position="171"/>
    </location>
</feature>
<feature type="helix" evidence="26">
    <location>
        <begin position="190"/>
        <end position="200"/>
    </location>
</feature>
<feature type="turn" evidence="26">
    <location>
        <begin position="201"/>
        <end position="203"/>
    </location>
</feature>
<feature type="helix" evidence="26">
    <location>
        <begin position="204"/>
        <end position="220"/>
    </location>
</feature>
<feature type="helix" evidence="26">
    <location>
        <begin position="340"/>
        <end position="344"/>
    </location>
</feature>
<feature type="helix" evidence="26">
    <location>
        <begin position="347"/>
        <end position="371"/>
    </location>
</feature>
<feature type="helix" evidence="26">
    <location>
        <begin position="379"/>
        <end position="403"/>
    </location>
</feature>
<feature type="helix" evidence="26">
    <location>
        <begin position="405"/>
        <end position="412"/>
    </location>
</feature>